<proteinExistence type="inferred from homology"/>
<evidence type="ECO:0000255" key="1">
    <source>
        <dbReference type="HAMAP-Rule" id="MF_00023"/>
    </source>
</evidence>
<protein>
    <recommendedName>
        <fullName evidence="1">SsrA-binding protein</fullName>
    </recommendedName>
    <alternativeName>
        <fullName evidence="1">Small protein B</fullName>
    </alternativeName>
</protein>
<organism>
    <name type="scientific">Azoarcus sp. (strain BH72)</name>
    <dbReference type="NCBI Taxonomy" id="418699"/>
    <lineage>
        <taxon>Bacteria</taxon>
        <taxon>Pseudomonadati</taxon>
        <taxon>Pseudomonadota</taxon>
        <taxon>Betaproteobacteria</taxon>
        <taxon>Rhodocyclales</taxon>
        <taxon>Zoogloeaceae</taxon>
        <taxon>Azoarcus</taxon>
    </lineage>
</organism>
<sequence>MSIIDNRKAYHDYFIEEKYEAGLVLEGWEVKAIRAGRANIKEAYIIVRGEEIFILGMHITPLASASTHIRTDPTRTRKLLLHGAEIARLIGKVERAGFTLVPLDLHYAKGRVKAEIGLAKGKKQYDKREDEKKRDWEREKQRLMRVKA</sequence>
<feature type="chain" id="PRO_1000001996" description="SsrA-binding protein">
    <location>
        <begin position="1"/>
        <end position="148"/>
    </location>
</feature>
<name>SSRP_AZOSB</name>
<gene>
    <name evidence="1" type="primary">smpB</name>
    <name type="ordered locus">azo1576</name>
</gene>
<reference key="1">
    <citation type="journal article" date="2006" name="Nat. Biotechnol.">
        <title>Complete genome of the mutualistic, N2-fixing grass endophyte Azoarcus sp. strain BH72.</title>
        <authorList>
            <person name="Krause A."/>
            <person name="Ramakumar A."/>
            <person name="Bartels D."/>
            <person name="Battistoni F."/>
            <person name="Bekel T."/>
            <person name="Boch J."/>
            <person name="Boehm M."/>
            <person name="Friedrich F."/>
            <person name="Hurek T."/>
            <person name="Krause L."/>
            <person name="Linke B."/>
            <person name="McHardy A.C."/>
            <person name="Sarkar A."/>
            <person name="Schneiker S."/>
            <person name="Syed A.A."/>
            <person name="Thauer R."/>
            <person name="Vorhoelter F.-J."/>
            <person name="Weidner S."/>
            <person name="Puehler A."/>
            <person name="Reinhold-Hurek B."/>
            <person name="Kaiser O."/>
            <person name="Goesmann A."/>
        </authorList>
    </citation>
    <scope>NUCLEOTIDE SEQUENCE [LARGE SCALE GENOMIC DNA]</scope>
    <source>
        <strain>BH72</strain>
    </source>
</reference>
<dbReference type="EMBL" id="AM406670">
    <property type="protein sequence ID" value="CAL94193.1"/>
    <property type="molecule type" value="Genomic_DNA"/>
</dbReference>
<dbReference type="RefSeq" id="WP_011765309.1">
    <property type="nucleotide sequence ID" value="NC_008702.1"/>
</dbReference>
<dbReference type="SMR" id="A1K5T8"/>
<dbReference type="STRING" id="62928.azo1576"/>
<dbReference type="KEGG" id="aoa:dqs_1699"/>
<dbReference type="KEGG" id="azo:azo1576"/>
<dbReference type="eggNOG" id="COG0691">
    <property type="taxonomic scope" value="Bacteria"/>
</dbReference>
<dbReference type="HOGENOM" id="CLU_108953_3_0_4"/>
<dbReference type="OrthoDB" id="9805462at2"/>
<dbReference type="Proteomes" id="UP000002588">
    <property type="component" value="Chromosome"/>
</dbReference>
<dbReference type="GO" id="GO:0005829">
    <property type="term" value="C:cytosol"/>
    <property type="evidence" value="ECO:0007669"/>
    <property type="project" value="TreeGrafter"/>
</dbReference>
<dbReference type="GO" id="GO:0003723">
    <property type="term" value="F:RNA binding"/>
    <property type="evidence" value="ECO:0007669"/>
    <property type="project" value="UniProtKB-UniRule"/>
</dbReference>
<dbReference type="GO" id="GO:0070929">
    <property type="term" value="P:trans-translation"/>
    <property type="evidence" value="ECO:0007669"/>
    <property type="project" value="UniProtKB-UniRule"/>
</dbReference>
<dbReference type="CDD" id="cd09294">
    <property type="entry name" value="SmpB"/>
    <property type="match status" value="1"/>
</dbReference>
<dbReference type="Gene3D" id="2.40.280.10">
    <property type="match status" value="1"/>
</dbReference>
<dbReference type="HAMAP" id="MF_00023">
    <property type="entry name" value="SmpB"/>
    <property type="match status" value="1"/>
</dbReference>
<dbReference type="InterPro" id="IPR023620">
    <property type="entry name" value="SmpB"/>
</dbReference>
<dbReference type="InterPro" id="IPR000037">
    <property type="entry name" value="SsrA-bd_prot"/>
</dbReference>
<dbReference type="InterPro" id="IPR020081">
    <property type="entry name" value="SsrA-bd_prot_CS"/>
</dbReference>
<dbReference type="NCBIfam" id="NF003843">
    <property type="entry name" value="PRK05422.1"/>
    <property type="match status" value="1"/>
</dbReference>
<dbReference type="NCBIfam" id="TIGR00086">
    <property type="entry name" value="smpB"/>
    <property type="match status" value="1"/>
</dbReference>
<dbReference type="PANTHER" id="PTHR30308:SF2">
    <property type="entry name" value="SSRA-BINDING PROTEIN"/>
    <property type="match status" value="1"/>
</dbReference>
<dbReference type="PANTHER" id="PTHR30308">
    <property type="entry name" value="TMRNA-BINDING COMPONENT OF TRANS-TRANSLATION TAGGING COMPLEX"/>
    <property type="match status" value="1"/>
</dbReference>
<dbReference type="Pfam" id="PF01668">
    <property type="entry name" value="SmpB"/>
    <property type="match status" value="1"/>
</dbReference>
<dbReference type="SUPFAM" id="SSF74982">
    <property type="entry name" value="Small protein B (SmpB)"/>
    <property type="match status" value="1"/>
</dbReference>
<dbReference type="PROSITE" id="PS01317">
    <property type="entry name" value="SSRP"/>
    <property type="match status" value="1"/>
</dbReference>
<accession>A1K5T8</accession>
<comment type="function">
    <text evidence="1">Required for rescue of stalled ribosomes mediated by trans-translation. Binds to transfer-messenger RNA (tmRNA), required for stable association of tmRNA with ribosomes. tmRNA and SmpB together mimic tRNA shape, replacing the anticodon stem-loop with SmpB. tmRNA is encoded by the ssrA gene; the 2 termini fold to resemble tRNA(Ala) and it encodes a 'tag peptide', a short internal open reading frame. During trans-translation Ala-aminoacylated tmRNA acts like a tRNA, entering the A-site of stalled ribosomes, displacing the stalled mRNA. The ribosome then switches to translate the ORF on the tmRNA; the nascent peptide is terminated with the 'tag peptide' encoded by the tmRNA and targeted for degradation. The ribosome is freed to recommence translation, which seems to be the essential function of trans-translation.</text>
</comment>
<comment type="subcellular location">
    <subcellularLocation>
        <location evidence="1">Cytoplasm</location>
    </subcellularLocation>
    <text evidence="1">The tmRNA-SmpB complex associates with stalled 70S ribosomes.</text>
</comment>
<comment type="similarity">
    <text evidence="1">Belongs to the SmpB family.</text>
</comment>
<keyword id="KW-0963">Cytoplasm</keyword>
<keyword id="KW-1185">Reference proteome</keyword>
<keyword id="KW-0694">RNA-binding</keyword>